<accession>B7N255</accession>
<dbReference type="EMBL" id="CU928162">
    <property type="protein sequence ID" value="CAR10426.2"/>
    <property type="molecule type" value="Genomic_DNA"/>
</dbReference>
<dbReference type="RefSeq" id="WP_000003382.1">
    <property type="nucleotide sequence ID" value="NC_011745.1"/>
</dbReference>
<dbReference type="SMR" id="B7N255"/>
<dbReference type="GeneID" id="89518465"/>
<dbReference type="KEGG" id="ecq:ECED1_4295"/>
<dbReference type="HOGENOM" id="CLU_111574_1_0_6"/>
<dbReference type="Proteomes" id="UP000000748">
    <property type="component" value="Chromosome"/>
</dbReference>
<dbReference type="GO" id="GO:0005737">
    <property type="term" value="C:cytoplasm"/>
    <property type="evidence" value="ECO:0007669"/>
    <property type="project" value="UniProtKB-SubCell"/>
</dbReference>
<dbReference type="GO" id="GO:0051082">
    <property type="term" value="F:unfolded protein binding"/>
    <property type="evidence" value="ECO:0007669"/>
    <property type="project" value="InterPro"/>
</dbReference>
<dbReference type="GO" id="GO:0006457">
    <property type="term" value="P:protein folding"/>
    <property type="evidence" value="ECO:0007669"/>
    <property type="project" value="UniProtKB-UniRule"/>
</dbReference>
<dbReference type="GO" id="GO:0051262">
    <property type="term" value="P:protein tetramerization"/>
    <property type="evidence" value="ECO:0007669"/>
    <property type="project" value="InterPro"/>
</dbReference>
<dbReference type="GO" id="GO:0015031">
    <property type="term" value="P:protein transport"/>
    <property type="evidence" value="ECO:0007669"/>
    <property type="project" value="UniProtKB-UniRule"/>
</dbReference>
<dbReference type="CDD" id="cd00557">
    <property type="entry name" value="Translocase_SecB"/>
    <property type="match status" value="1"/>
</dbReference>
<dbReference type="FunFam" id="3.10.420.10:FF:000001">
    <property type="entry name" value="Protein-export chaperone SecB"/>
    <property type="match status" value="1"/>
</dbReference>
<dbReference type="Gene3D" id="3.10.420.10">
    <property type="entry name" value="SecB-like"/>
    <property type="match status" value="1"/>
</dbReference>
<dbReference type="HAMAP" id="MF_00821">
    <property type="entry name" value="SecB"/>
    <property type="match status" value="1"/>
</dbReference>
<dbReference type="InterPro" id="IPR003708">
    <property type="entry name" value="SecB"/>
</dbReference>
<dbReference type="InterPro" id="IPR035958">
    <property type="entry name" value="SecB-like_sf"/>
</dbReference>
<dbReference type="NCBIfam" id="NF004390">
    <property type="entry name" value="PRK05751.1-1"/>
    <property type="match status" value="1"/>
</dbReference>
<dbReference type="NCBIfam" id="NF004393">
    <property type="entry name" value="PRK05751.1-4"/>
    <property type="match status" value="1"/>
</dbReference>
<dbReference type="NCBIfam" id="TIGR00809">
    <property type="entry name" value="secB"/>
    <property type="match status" value="1"/>
</dbReference>
<dbReference type="PANTHER" id="PTHR36918">
    <property type="match status" value="1"/>
</dbReference>
<dbReference type="PANTHER" id="PTHR36918:SF1">
    <property type="entry name" value="PROTEIN-EXPORT PROTEIN SECB"/>
    <property type="match status" value="1"/>
</dbReference>
<dbReference type="Pfam" id="PF02556">
    <property type="entry name" value="SecB"/>
    <property type="match status" value="1"/>
</dbReference>
<dbReference type="PRINTS" id="PR01594">
    <property type="entry name" value="SECBCHAPRONE"/>
</dbReference>
<dbReference type="SUPFAM" id="SSF54611">
    <property type="entry name" value="SecB-like"/>
    <property type="match status" value="1"/>
</dbReference>
<sequence length="155" mass="17291">MSEQNNTEMTFQIQRIYTKDISFEAPNAPHVFQKDWQPEVKLDLDTASTQLADDVYEVVLRVTVTASLGEETAFLCEVQQGGIFSIAGIEGTQMAHCLGAYCPNILFPYARECITSMVSRGTFPQLNLAPVNFDALFMNYLQQQAGEGTEEHQDA</sequence>
<feature type="chain" id="PRO_1000148703" description="Protein-export protein SecB">
    <location>
        <begin position="1"/>
        <end position="155"/>
    </location>
</feature>
<reference key="1">
    <citation type="journal article" date="2009" name="PLoS Genet.">
        <title>Organised genome dynamics in the Escherichia coli species results in highly diverse adaptive paths.</title>
        <authorList>
            <person name="Touchon M."/>
            <person name="Hoede C."/>
            <person name="Tenaillon O."/>
            <person name="Barbe V."/>
            <person name="Baeriswyl S."/>
            <person name="Bidet P."/>
            <person name="Bingen E."/>
            <person name="Bonacorsi S."/>
            <person name="Bouchier C."/>
            <person name="Bouvet O."/>
            <person name="Calteau A."/>
            <person name="Chiapello H."/>
            <person name="Clermont O."/>
            <person name="Cruveiller S."/>
            <person name="Danchin A."/>
            <person name="Diard M."/>
            <person name="Dossat C."/>
            <person name="Karoui M.E."/>
            <person name="Frapy E."/>
            <person name="Garry L."/>
            <person name="Ghigo J.M."/>
            <person name="Gilles A.M."/>
            <person name="Johnson J."/>
            <person name="Le Bouguenec C."/>
            <person name="Lescat M."/>
            <person name="Mangenot S."/>
            <person name="Martinez-Jehanne V."/>
            <person name="Matic I."/>
            <person name="Nassif X."/>
            <person name="Oztas S."/>
            <person name="Petit M.A."/>
            <person name="Pichon C."/>
            <person name="Rouy Z."/>
            <person name="Ruf C.S."/>
            <person name="Schneider D."/>
            <person name="Tourret J."/>
            <person name="Vacherie B."/>
            <person name="Vallenet D."/>
            <person name="Medigue C."/>
            <person name="Rocha E.P.C."/>
            <person name="Denamur E."/>
        </authorList>
    </citation>
    <scope>NUCLEOTIDE SEQUENCE [LARGE SCALE GENOMIC DNA]</scope>
    <source>
        <strain>ED1a</strain>
    </source>
</reference>
<name>SECB_ECO81</name>
<comment type="function">
    <text evidence="1">One of the proteins required for the normal export of preproteins out of the cell cytoplasm. It is a molecular chaperone that binds to a subset of precursor proteins, maintaining them in a translocation-competent state. It also specifically binds to its receptor SecA.</text>
</comment>
<comment type="subunit">
    <text evidence="1">Homotetramer, a dimer of dimers. One homotetramer interacts with 1 SecA dimer.</text>
</comment>
<comment type="subcellular location">
    <subcellularLocation>
        <location evidence="1">Cytoplasm</location>
    </subcellularLocation>
</comment>
<comment type="similarity">
    <text evidence="1">Belongs to the SecB family.</text>
</comment>
<proteinExistence type="inferred from homology"/>
<gene>
    <name evidence="1" type="primary">secB</name>
    <name type="ordered locus">ECED1_4295</name>
</gene>
<protein>
    <recommendedName>
        <fullName evidence="1">Protein-export protein SecB</fullName>
    </recommendedName>
</protein>
<organism>
    <name type="scientific">Escherichia coli O81 (strain ED1a)</name>
    <dbReference type="NCBI Taxonomy" id="585397"/>
    <lineage>
        <taxon>Bacteria</taxon>
        <taxon>Pseudomonadati</taxon>
        <taxon>Pseudomonadota</taxon>
        <taxon>Gammaproteobacteria</taxon>
        <taxon>Enterobacterales</taxon>
        <taxon>Enterobacteriaceae</taxon>
        <taxon>Escherichia</taxon>
    </lineage>
</organism>
<evidence type="ECO:0000255" key="1">
    <source>
        <dbReference type="HAMAP-Rule" id="MF_00821"/>
    </source>
</evidence>
<keyword id="KW-0143">Chaperone</keyword>
<keyword id="KW-0963">Cytoplasm</keyword>
<keyword id="KW-0653">Protein transport</keyword>
<keyword id="KW-0811">Translocation</keyword>
<keyword id="KW-0813">Transport</keyword>